<comment type="function">
    <text evidence="1">Flavin transferase that catalyzes the transfer of the FMN moiety of FAD and its covalent binding to the hydroxyl group of a threonine residue in a target flavoprotein such as NqrB and NqrC, two subunits of the NQR complex.</text>
</comment>
<comment type="catalytic activity">
    <reaction evidence="1">
        <text>L-threonyl-[protein] + FAD = FMN-L-threonyl-[protein] + AMP + H(+)</text>
        <dbReference type="Rhea" id="RHEA:36847"/>
        <dbReference type="Rhea" id="RHEA-COMP:11060"/>
        <dbReference type="Rhea" id="RHEA-COMP:11061"/>
        <dbReference type="ChEBI" id="CHEBI:15378"/>
        <dbReference type="ChEBI" id="CHEBI:30013"/>
        <dbReference type="ChEBI" id="CHEBI:57692"/>
        <dbReference type="ChEBI" id="CHEBI:74257"/>
        <dbReference type="ChEBI" id="CHEBI:456215"/>
        <dbReference type="EC" id="2.7.1.180"/>
    </reaction>
</comment>
<comment type="cofactor">
    <cofactor evidence="1">
        <name>Mg(2+)</name>
        <dbReference type="ChEBI" id="CHEBI:18420"/>
    </cofactor>
</comment>
<comment type="subcellular location">
    <subcellularLocation>
        <location evidence="3 4">Cell inner membrane</location>
        <topology evidence="3 4">Lipid-anchor</topology>
        <orientation evidence="3">Periplasmic side</orientation>
    </subcellularLocation>
</comment>
<comment type="similarity">
    <text evidence="5">Belongs to the ApbE family.</text>
</comment>
<comment type="sequence caution" evidence="5">
    <conflict type="erroneous initiation">
        <sequence resource="EMBL-CDS" id="AAF39210"/>
    </conflict>
</comment>
<gene>
    <name type="primary">apbE</name>
    <name type="ordered locus">TC_0349</name>
</gene>
<evidence type="ECO:0000250" key="1">
    <source>
        <dbReference type="UniProtKB" id="A5F5Y3"/>
    </source>
</evidence>
<evidence type="ECO:0000250" key="2">
    <source>
        <dbReference type="UniProtKB" id="O83774"/>
    </source>
</evidence>
<evidence type="ECO:0000250" key="3">
    <source>
        <dbReference type="UniProtKB" id="P41780"/>
    </source>
</evidence>
<evidence type="ECO:0000255" key="4">
    <source>
        <dbReference type="PROSITE-ProRule" id="PRU00303"/>
    </source>
</evidence>
<evidence type="ECO:0000305" key="5"/>
<feature type="signal peptide" evidence="4">
    <location>
        <begin position="1"/>
        <end position="19"/>
    </location>
</feature>
<feature type="chain" id="PRO_0000001745" description="FAD:protein FMN transferase">
    <location>
        <begin position="20"/>
        <end position="316"/>
    </location>
</feature>
<feature type="binding site" evidence="3">
    <location>
        <position position="33"/>
    </location>
    <ligand>
        <name>FAD</name>
        <dbReference type="ChEBI" id="CHEBI:57692"/>
    </ligand>
</feature>
<feature type="binding site" evidence="3">
    <location>
        <position position="71"/>
    </location>
    <ligand>
        <name>FAD</name>
        <dbReference type="ChEBI" id="CHEBI:57692"/>
    </ligand>
</feature>
<feature type="binding site" evidence="3">
    <location>
        <begin position="112"/>
        <end position="114"/>
    </location>
    <ligand>
        <name>FAD</name>
        <dbReference type="ChEBI" id="CHEBI:57692"/>
    </ligand>
</feature>
<feature type="binding site" evidence="3">
    <location>
        <position position="170"/>
    </location>
    <ligand>
        <name>FAD</name>
        <dbReference type="ChEBI" id="CHEBI:57692"/>
    </ligand>
</feature>
<feature type="binding site" evidence="2">
    <location>
        <position position="173"/>
    </location>
    <ligand>
        <name>Mg(2+)</name>
        <dbReference type="ChEBI" id="CHEBI:18420"/>
    </ligand>
</feature>
<feature type="binding site" evidence="2">
    <location>
        <position position="176"/>
    </location>
    <ligand>
        <name>FAD</name>
        <dbReference type="ChEBI" id="CHEBI:57692"/>
    </ligand>
</feature>
<feature type="binding site" evidence="3">
    <location>
        <position position="253"/>
    </location>
    <ligand>
        <name>FAD</name>
        <dbReference type="ChEBI" id="CHEBI:57692"/>
    </ligand>
</feature>
<feature type="binding site" evidence="2">
    <location>
        <position position="282"/>
    </location>
    <ligand>
        <name>Mg(2+)</name>
        <dbReference type="ChEBI" id="CHEBI:18420"/>
    </ligand>
</feature>
<feature type="binding site" evidence="2">
    <location>
        <position position="286"/>
    </location>
    <ligand>
        <name>Mg(2+)</name>
        <dbReference type="ChEBI" id="CHEBI:18420"/>
    </ligand>
</feature>
<feature type="lipid moiety-binding region" description="N-palmitoyl cysteine" evidence="4">
    <location>
        <position position="20"/>
    </location>
</feature>
<feature type="lipid moiety-binding region" description="S-diacylglycerol cysteine" evidence="4">
    <location>
        <position position="20"/>
    </location>
</feature>
<organism>
    <name type="scientific">Chlamydia muridarum (strain MoPn / Nigg)</name>
    <dbReference type="NCBI Taxonomy" id="243161"/>
    <lineage>
        <taxon>Bacteria</taxon>
        <taxon>Pseudomonadati</taxon>
        <taxon>Chlamydiota</taxon>
        <taxon>Chlamydiia</taxon>
        <taxon>Chlamydiales</taxon>
        <taxon>Chlamydiaceae</taxon>
        <taxon>Chlamydia/Chlamydophila group</taxon>
        <taxon>Chlamydia</taxon>
    </lineage>
</organism>
<reference key="1">
    <citation type="journal article" date="2000" name="Nucleic Acids Res.">
        <title>Genome sequences of Chlamydia trachomatis MoPn and Chlamydia pneumoniae AR39.</title>
        <authorList>
            <person name="Read T.D."/>
            <person name="Brunham R.C."/>
            <person name="Shen C."/>
            <person name="Gill S.R."/>
            <person name="Heidelberg J.F."/>
            <person name="White O."/>
            <person name="Hickey E.K."/>
            <person name="Peterson J.D."/>
            <person name="Utterback T.R."/>
            <person name="Berry K.J."/>
            <person name="Bass S."/>
            <person name="Linher K.D."/>
            <person name="Weidman J.F."/>
            <person name="Khouri H.M."/>
            <person name="Craven B."/>
            <person name="Bowman C."/>
            <person name="Dodson R.J."/>
            <person name="Gwinn M.L."/>
            <person name="Nelson W.C."/>
            <person name="DeBoy R.T."/>
            <person name="Kolonay J.F."/>
            <person name="McClarty G."/>
            <person name="Salzberg S.L."/>
            <person name="Eisen J.A."/>
            <person name="Fraser C.M."/>
        </authorList>
    </citation>
    <scope>NUCLEOTIDE SEQUENCE [LARGE SCALE GENOMIC DNA]</scope>
    <source>
        <strain>MoPn / Nigg</strain>
    </source>
</reference>
<sequence length="316" mass="35726">MGKFFTPYALIIFVFLIQACSSPSKTIFEGVRMTIPYRVVLGETLSFSQKKQAQKEIDQIFDHIDQIFNNWNPFSEISRINRSETLEPISLSPELFSFLCEIDRFHTFSDGRFDPTLGALKNLWLLHLKSQTLPPQELLHSYKQNTGWHLLSLDKTNHTLKKLSPSVQLDLCGAVKGFAVDLLGIFCSQFCQNYYVEWGGEIKTSGKHPSGRSWAIASSATPEILHLNNSSIATSGNQYQRWYVNKKIYTHILDPLTGIPLEESSYPILAVSVIDENCAFADAMATALTTFTSKQEALDWAKKKHLCVYITDKNAS</sequence>
<keyword id="KW-0997">Cell inner membrane</keyword>
<keyword id="KW-1003">Cell membrane</keyword>
<keyword id="KW-0274">FAD</keyword>
<keyword id="KW-0285">Flavoprotein</keyword>
<keyword id="KW-0449">Lipoprotein</keyword>
<keyword id="KW-0460">Magnesium</keyword>
<keyword id="KW-0472">Membrane</keyword>
<keyword id="KW-0479">Metal-binding</keyword>
<keyword id="KW-0564">Palmitate</keyword>
<keyword id="KW-0732">Signal</keyword>
<keyword id="KW-0808">Transferase</keyword>
<dbReference type="EC" id="2.7.1.180" evidence="1"/>
<dbReference type="EMBL" id="AE002160">
    <property type="protein sequence ID" value="AAF39210.1"/>
    <property type="status" value="ALT_INIT"/>
    <property type="molecule type" value="Genomic_DNA"/>
</dbReference>
<dbReference type="PIR" id="E81713">
    <property type="entry name" value="E81713"/>
</dbReference>
<dbReference type="RefSeq" id="WP_010230229.1">
    <property type="nucleotide sequence ID" value="NZ_CP063055.1"/>
</dbReference>
<dbReference type="SMR" id="Q9PKW2"/>
<dbReference type="GeneID" id="1245702"/>
<dbReference type="KEGG" id="cmu:TC_0349"/>
<dbReference type="eggNOG" id="COG1477">
    <property type="taxonomic scope" value="Bacteria"/>
</dbReference>
<dbReference type="HOGENOM" id="CLU_044403_0_1_0"/>
<dbReference type="OrthoDB" id="9778595at2"/>
<dbReference type="Proteomes" id="UP000000800">
    <property type="component" value="Chromosome"/>
</dbReference>
<dbReference type="GO" id="GO:0005886">
    <property type="term" value="C:plasma membrane"/>
    <property type="evidence" value="ECO:0007669"/>
    <property type="project" value="UniProtKB-SubCell"/>
</dbReference>
<dbReference type="GO" id="GO:0046872">
    <property type="term" value="F:metal ion binding"/>
    <property type="evidence" value="ECO:0007669"/>
    <property type="project" value="UniProtKB-KW"/>
</dbReference>
<dbReference type="GO" id="GO:0016740">
    <property type="term" value="F:transferase activity"/>
    <property type="evidence" value="ECO:0007669"/>
    <property type="project" value="UniProtKB-KW"/>
</dbReference>
<dbReference type="Gene3D" id="3.10.520.10">
    <property type="entry name" value="ApbE-like domains"/>
    <property type="match status" value="1"/>
</dbReference>
<dbReference type="InterPro" id="IPR024932">
    <property type="entry name" value="ApbE"/>
</dbReference>
<dbReference type="InterPro" id="IPR003374">
    <property type="entry name" value="ApbE-like_sf"/>
</dbReference>
<dbReference type="PANTHER" id="PTHR30040:SF2">
    <property type="entry name" value="FAD:PROTEIN FMN TRANSFERASE"/>
    <property type="match status" value="1"/>
</dbReference>
<dbReference type="PANTHER" id="PTHR30040">
    <property type="entry name" value="THIAMINE BIOSYNTHESIS LIPOPROTEIN APBE"/>
    <property type="match status" value="1"/>
</dbReference>
<dbReference type="Pfam" id="PF02424">
    <property type="entry name" value="ApbE"/>
    <property type="match status" value="1"/>
</dbReference>
<dbReference type="PIRSF" id="PIRSF006268">
    <property type="entry name" value="ApbE"/>
    <property type="match status" value="1"/>
</dbReference>
<dbReference type="SUPFAM" id="SSF143631">
    <property type="entry name" value="ApbE-like"/>
    <property type="match status" value="1"/>
</dbReference>
<dbReference type="PROSITE" id="PS51257">
    <property type="entry name" value="PROKAR_LIPOPROTEIN"/>
    <property type="match status" value="1"/>
</dbReference>
<proteinExistence type="inferred from homology"/>
<name>APBE_CHLMU</name>
<accession>Q9PKW2</accession>
<protein>
    <recommendedName>
        <fullName evidence="1">FAD:protein FMN transferase</fullName>
        <ecNumber evidence="1">2.7.1.180</ecNumber>
    </recommendedName>
    <alternativeName>
        <fullName evidence="1">Flavin transferase</fullName>
    </alternativeName>
</protein>